<organism>
    <name type="scientific">Avian infectious bronchitis virus (strain H120)</name>
    <name type="common">IBV</name>
    <dbReference type="NCBI Taxonomy" id="231424"/>
    <lineage>
        <taxon>Viruses</taxon>
        <taxon>Riboviria</taxon>
        <taxon>Orthornavirae</taxon>
        <taxon>Pisuviricota</taxon>
        <taxon>Pisoniviricetes</taxon>
        <taxon>Nidovirales</taxon>
        <taxon>Cornidovirineae</taxon>
        <taxon>Coronaviridae</taxon>
        <taxon>Orthocoronavirinae</taxon>
        <taxon>Gammacoronavirus</taxon>
        <taxon>Igacovirus</taxon>
        <taxon>Avian coronavirus</taxon>
    </lineage>
</organism>
<organismHost>
    <name type="scientific">Gallus gallus</name>
    <name type="common">Chicken</name>
    <dbReference type="NCBI Taxonomy" id="9031"/>
</organismHost>
<accession>Q98WJ7</accession>
<feature type="chain" id="PRO_0000105982" description="Nucleoprotein">
    <location>
        <begin position="1"/>
        <end position="409"/>
    </location>
</feature>
<feature type="domain" description="CoV N NTD" evidence="2">
    <location>
        <begin position="31"/>
        <end position="156"/>
    </location>
</feature>
<feature type="domain" description="CoV N CTD" evidence="3">
    <location>
        <begin position="215"/>
        <end position="331"/>
    </location>
</feature>
<feature type="region of interest" description="Disordered" evidence="4">
    <location>
        <begin position="1"/>
        <end position="32"/>
    </location>
</feature>
<feature type="region of interest" description="RNA-binding" evidence="1">
    <location>
        <begin position="29"/>
        <end position="160"/>
    </location>
</feature>
<feature type="region of interest" description="Disordered" evidence="4">
    <location>
        <begin position="44"/>
        <end position="63"/>
    </location>
</feature>
<feature type="region of interest" description="Disordered" evidence="4">
    <location>
        <begin position="120"/>
        <end position="145"/>
    </location>
</feature>
<feature type="region of interest" description="Disordered" evidence="4">
    <location>
        <begin position="164"/>
        <end position="193"/>
    </location>
</feature>
<feature type="region of interest" description="Dimerization" evidence="1">
    <location>
        <begin position="226"/>
        <end position="333"/>
    </location>
</feature>
<feature type="region of interest" description="Disordered" evidence="4">
    <location>
        <begin position="326"/>
        <end position="409"/>
    </location>
</feature>
<feature type="compositionally biased region" description="Low complexity" evidence="4">
    <location>
        <begin position="15"/>
        <end position="31"/>
    </location>
</feature>
<feature type="compositionally biased region" description="Low complexity" evidence="4">
    <location>
        <begin position="164"/>
        <end position="179"/>
    </location>
</feature>
<feature type="compositionally biased region" description="Basic and acidic residues" evidence="4">
    <location>
        <begin position="180"/>
        <end position="192"/>
    </location>
</feature>
<feature type="compositionally biased region" description="Polar residues" evidence="4">
    <location>
        <begin position="341"/>
        <end position="355"/>
    </location>
</feature>
<feature type="compositionally biased region" description="Basic residues" evidence="4">
    <location>
        <begin position="358"/>
        <end position="367"/>
    </location>
</feature>
<feature type="compositionally biased region" description="Basic and acidic residues" evidence="4">
    <location>
        <begin position="368"/>
        <end position="384"/>
    </location>
</feature>
<feature type="modified residue" description="Phosphoserine; by host" evidence="1">
    <location>
        <position position="190"/>
    </location>
</feature>
<feature type="modified residue" description="Phosphothreonine; by host" evidence="1">
    <location>
        <position position="378"/>
    </location>
</feature>
<feature type="modified residue" description="Phosphoserine; by host" evidence="1">
    <location>
        <position position="379"/>
    </location>
</feature>
<feature type="disulfide bond" evidence="1">
    <location>
        <begin position="320"/>
        <end position="323"/>
    </location>
</feature>
<name>NCAP_IBVH1</name>
<keyword id="KW-0013">ADP-ribosylation</keyword>
<keyword id="KW-1015">Disulfide bond</keyword>
<keyword id="KW-1040">Host Golgi apparatus</keyword>
<keyword id="KW-0597">Phosphoprotein</keyword>
<keyword id="KW-0687">Ribonucleoprotein</keyword>
<keyword id="KW-0694">RNA-binding</keyword>
<keyword id="KW-0804">Transcription</keyword>
<keyword id="KW-0805">Transcription regulation</keyword>
<keyword id="KW-0543">Viral nucleoprotein</keyword>
<keyword id="KW-0946">Virion</keyword>
<evidence type="ECO:0000255" key="1">
    <source>
        <dbReference type="HAMAP-Rule" id="MF_04097"/>
    </source>
</evidence>
<evidence type="ECO:0000255" key="2">
    <source>
        <dbReference type="PROSITE-ProRule" id="PRU01276"/>
    </source>
</evidence>
<evidence type="ECO:0000255" key="3">
    <source>
        <dbReference type="PROSITE-ProRule" id="PRU01277"/>
    </source>
</evidence>
<evidence type="ECO:0000256" key="4">
    <source>
        <dbReference type="SAM" id="MobiDB-lite"/>
    </source>
</evidence>
<protein>
    <recommendedName>
        <fullName evidence="1">Nucleoprotein</fullName>
    </recommendedName>
    <alternativeName>
        <fullName evidence="1">Nucleocapsid protein</fullName>
        <shortName evidence="1">NC</shortName>
        <shortName evidence="1">Protein N</shortName>
    </alternativeName>
</protein>
<reference key="1">
    <citation type="submission" date="2001-03" db="EMBL/GenBank/DDBJ databases">
        <title>Sequence analysis of the nucleocapsid gene of several avian infectious bronchitis virus vaccine strains.</title>
        <authorList>
            <person name="Cao W.S."/>
            <person name="Liao M."/>
            <person name="Ren T."/>
            <person name="Xin C.A."/>
        </authorList>
    </citation>
    <scope>NUCLEOTIDE SEQUENCE [GENOMIC RNA]</scope>
    <source>
        <strain>Isolate H120-GD</strain>
    </source>
</reference>
<sequence length="409" mass="45111">MASGKTTGKTDAPAPVIKLGGPKPPKVGSSGNASWFQALKAKKLNSPPPKFEGSGVPDNENLKLSQQHGYWRRQARYKPGKGGKKSVPDAWYFYYTGTGPAADLNWGDSQDGIVWVSAKGADTKSRSNQGTRDPDKFDQYPLRFSDGGPDGNFRWDFIPINRGRSGRSTAASSAASSRAPSRDGSRGRRSGAEDDLIARAAKIIQDQQKKGSRITKAKADEMAHRRYCKRTIPPGYKVDQVFGPRTKGKEGNFGDDKMNEEGIKDGRVIAMLNLVPSSHACLFGSRVTPKLQPDGLHLRFEFTTVVSRDDPQFDNYVKICDQCVDGVGTRPKDDEPRPKSRPNSRPATRTSSPAPRQQRQKKEKKSKKQDDEVDKALTSDEERNNAQLEFDDEPKVINWGDSALGENEL</sequence>
<gene>
    <name evidence="1" type="primary">N</name>
    <name type="ORF">6</name>
</gene>
<comment type="function">
    <text evidence="1">Packages the positive strand viral genome RNA into a helical ribonucleocapsid (RNP) and plays a fundamental role during virion assembly through its interactions with the viral genome and membrane protein M. Plays an important role in enhancing the efficiency of subgenomic viral RNA transcription as well as viral replication.</text>
</comment>
<comment type="subunit">
    <text evidence="1">Homooligomer. Both monomeric and oligomeric forms interact with RNA. Interacts with protein M. Interacts with NSP3; this interaction serves to tether the genome to the newly translated replicase-transcriptase complex at a very early stage of infection.</text>
</comment>
<comment type="subcellular location">
    <subcellularLocation>
        <location evidence="1">Virion</location>
    </subcellularLocation>
    <subcellularLocation>
        <location evidence="1">Host endoplasmic reticulum-Golgi intermediate compartment</location>
    </subcellularLocation>
    <subcellularLocation>
        <location evidence="1">Host Golgi apparatus</location>
    </subcellularLocation>
    <text evidence="1">Located inside the virion, complexed with the viral RNA. Probably associates with ER-derived membranes where it participates in viral RNA synthesis and virus budding.</text>
</comment>
<comment type="PTM">
    <text evidence="1">ADP-ribosylated. The ADP-ribosylation is retained in the virion during infection.</text>
</comment>
<comment type="PTM">
    <text evidence="1">Phosphorylated on serine and threonine residues.</text>
</comment>
<comment type="similarity">
    <text evidence="1">Belongs to the gammacoronavirus nucleocapsid protein family.</text>
</comment>
<dbReference type="EMBL" id="AY028296">
    <property type="protein sequence ID" value="AAK31607.1"/>
    <property type="molecule type" value="Genomic_RNA"/>
</dbReference>
<dbReference type="SMR" id="Q98WJ7"/>
<dbReference type="ABCD" id="Q98WJ7">
    <property type="antibodies" value="7 sequenced antibodies"/>
</dbReference>
<dbReference type="GO" id="GO:0044172">
    <property type="term" value="C:host cell endoplasmic reticulum-Golgi intermediate compartment"/>
    <property type="evidence" value="ECO:0007669"/>
    <property type="project" value="UniProtKB-SubCell"/>
</dbReference>
<dbReference type="GO" id="GO:0044177">
    <property type="term" value="C:host cell Golgi apparatus"/>
    <property type="evidence" value="ECO:0007669"/>
    <property type="project" value="UniProtKB-SubCell"/>
</dbReference>
<dbReference type="GO" id="GO:1990904">
    <property type="term" value="C:ribonucleoprotein complex"/>
    <property type="evidence" value="ECO:0007669"/>
    <property type="project" value="UniProtKB-KW"/>
</dbReference>
<dbReference type="GO" id="GO:0019013">
    <property type="term" value="C:viral nucleocapsid"/>
    <property type="evidence" value="ECO:0007669"/>
    <property type="project" value="UniProtKB-UniRule"/>
</dbReference>
<dbReference type="GO" id="GO:0003723">
    <property type="term" value="F:RNA binding"/>
    <property type="evidence" value="ECO:0007669"/>
    <property type="project" value="UniProtKB-UniRule"/>
</dbReference>
<dbReference type="CDD" id="cd21595">
    <property type="entry name" value="CoV_N-CTD"/>
    <property type="match status" value="1"/>
</dbReference>
<dbReference type="CDD" id="cd21554">
    <property type="entry name" value="CoV_N-NTD"/>
    <property type="match status" value="1"/>
</dbReference>
<dbReference type="HAMAP" id="MF_04097">
    <property type="entry name" value="GAMMA_CORONA_NCAP"/>
    <property type="match status" value="1"/>
</dbReference>
<dbReference type="InterPro" id="IPR044344">
    <property type="entry name" value="N_prot_C_CoV"/>
</dbReference>
<dbReference type="InterPro" id="IPR044345">
    <property type="entry name" value="N_prot_N_CoV"/>
</dbReference>
<dbReference type="InterPro" id="IPR042547">
    <property type="entry name" value="NCAP_gCoV"/>
</dbReference>
<dbReference type="InterPro" id="IPR001218">
    <property type="entry name" value="Nucleocap_CoV"/>
</dbReference>
<dbReference type="InterPro" id="IPR037179">
    <property type="entry name" value="Nucleocapsid_C"/>
</dbReference>
<dbReference type="InterPro" id="IPR037195">
    <property type="entry name" value="Nucleocapsid_N"/>
</dbReference>
<dbReference type="Pfam" id="PF00937">
    <property type="entry name" value="CoV_nucleocap"/>
    <property type="match status" value="1"/>
</dbReference>
<dbReference type="PIRSF" id="PIRSF003888">
    <property type="entry name" value="Corona_nucleocap"/>
    <property type="match status" value="1"/>
</dbReference>
<dbReference type="SUPFAM" id="SSF110304">
    <property type="entry name" value="Coronavirus RNA-binding domain"/>
    <property type="match status" value="1"/>
</dbReference>
<dbReference type="SUPFAM" id="SSF103068">
    <property type="entry name" value="Nucleocapsid protein dimerization domain"/>
    <property type="match status" value="1"/>
</dbReference>
<dbReference type="PROSITE" id="PS51929">
    <property type="entry name" value="COV_N_CTD"/>
    <property type="match status" value="1"/>
</dbReference>
<dbReference type="PROSITE" id="PS51928">
    <property type="entry name" value="COV_N_NTD"/>
    <property type="match status" value="1"/>
</dbReference>
<proteinExistence type="inferred from homology"/>